<dbReference type="EC" id="2.4.1.227" evidence="1"/>
<dbReference type="EMBL" id="AE017196">
    <property type="protein sequence ID" value="AAS14057.1"/>
    <property type="molecule type" value="Genomic_DNA"/>
</dbReference>
<dbReference type="RefSeq" id="WP_007549072.1">
    <property type="nucleotide sequence ID" value="NZ_OX384529.1"/>
</dbReference>
<dbReference type="SMR" id="Q73I55"/>
<dbReference type="CAZy" id="GT28">
    <property type="family name" value="Glycosyltransferase Family 28"/>
</dbReference>
<dbReference type="EnsemblBacteria" id="AAS14057">
    <property type="protein sequence ID" value="AAS14057"/>
    <property type="gene ID" value="WD_0323"/>
</dbReference>
<dbReference type="GeneID" id="70035814"/>
<dbReference type="KEGG" id="wol:WD_0323"/>
<dbReference type="eggNOG" id="COG0707">
    <property type="taxonomic scope" value="Bacteria"/>
</dbReference>
<dbReference type="UniPathway" id="UPA00219"/>
<dbReference type="Proteomes" id="UP000008215">
    <property type="component" value="Chromosome"/>
</dbReference>
<dbReference type="GO" id="GO:0005886">
    <property type="term" value="C:plasma membrane"/>
    <property type="evidence" value="ECO:0007669"/>
    <property type="project" value="UniProtKB-SubCell"/>
</dbReference>
<dbReference type="GO" id="GO:0051991">
    <property type="term" value="F:UDP-N-acetyl-D-glucosamine:N-acetylmuramoyl-L-alanyl-D-glutamyl-meso-2,6-diaminopimelyl-D-alanyl-D-alanine-diphosphoundecaprenol 4-beta-N-acetylglucosaminlytransferase activity"/>
    <property type="evidence" value="ECO:0007669"/>
    <property type="project" value="RHEA"/>
</dbReference>
<dbReference type="GO" id="GO:0050511">
    <property type="term" value="F:undecaprenyldiphospho-muramoylpentapeptide beta-N-acetylglucosaminyltransferase activity"/>
    <property type="evidence" value="ECO:0007669"/>
    <property type="project" value="UniProtKB-UniRule"/>
</dbReference>
<dbReference type="GO" id="GO:0005975">
    <property type="term" value="P:carbohydrate metabolic process"/>
    <property type="evidence" value="ECO:0007669"/>
    <property type="project" value="InterPro"/>
</dbReference>
<dbReference type="GO" id="GO:0051301">
    <property type="term" value="P:cell division"/>
    <property type="evidence" value="ECO:0007669"/>
    <property type="project" value="UniProtKB-KW"/>
</dbReference>
<dbReference type="GO" id="GO:0071555">
    <property type="term" value="P:cell wall organization"/>
    <property type="evidence" value="ECO:0007669"/>
    <property type="project" value="UniProtKB-KW"/>
</dbReference>
<dbReference type="GO" id="GO:0030259">
    <property type="term" value="P:lipid glycosylation"/>
    <property type="evidence" value="ECO:0007669"/>
    <property type="project" value="UniProtKB-UniRule"/>
</dbReference>
<dbReference type="GO" id="GO:0009252">
    <property type="term" value="P:peptidoglycan biosynthetic process"/>
    <property type="evidence" value="ECO:0007669"/>
    <property type="project" value="UniProtKB-UniRule"/>
</dbReference>
<dbReference type="GO" id="GO:0008360">
    <property type="term" value="P:regulation of cell shape"/>
    <property type="evidence" value="ECO:0007669"/>
    <property type="project" value="UniProtKB-KW"/>
</dbReference>
<dbReference type="CDD" id="cd03785">
    <property type="entry name" value="GT28_MurG"/>
    <property type="match status" value="1"/>
</dbReference>
<dbReference type="Gene3D" id="3.40.50.2000">
    <property type="entry name" value="Glycogen Phosphorylase B"/>
    <property type="match status" value="2"/>
</dbReference>
<dbReference type="HAMAP" id="MF_00033">
    <property type="entry name" value="MurG"/>
    <property type="match status" value="1"/>
</dbReference>
<dbReference type="InterPro" id="IPR006009">
    <property type="entry name" value="GlcNAc_MurG"/>
</dbReference>
<dbReference type="InterPro" id="IPR007235">
    <property type="entry name" value="Glyco_trans_28_C"/>
</dbReference>
<dbReference type="InterPro" id="IPR004276">
    <property type="entry name" value="GlycoTrans_28_N"/>
</dbReference>
<dbReference type="NCBIfam" id="TIGR01133">
    <property type="entry name" value="murG"/>
    <property type="match status" value="1"/>
</dbReference>
<dbReference type="PANTHER" id="PTHR21015:SF22">
    <property type="entry name" value="GLYCOSYLTRANSFERASE"/>
    <property type="match status" value="1"/>
</dbReference>
<dbReference type="PANTHER" id="PTHR21015">
    <property type="entry name" value="UDP-N-ACETYLGLUCOSAMINE--N-ACETYLMURAMYL-(PENTAPEPTIDE) PYROPHOSPHORYL-UNDECAPRENOL N-ACETYLGLUCOSAMINE TRANSFERASE 1"/>
    <property type="match status" value="1"/>
</dbReference>
<dbReference type="Pfam" id="PF04101">
    <property type="entry name" value="Glyco_tran_28_C"/>
    <property type="match status" value="1"/>
</dbReference>
<dbReference type="Pfam" id="PF03033">
    <property type="entry name" value="Glyco_transf_28"/>
    <property type="match status" value="1"/>
</dbReference>
<dbReference type="SUPFAM" id="SSF53756">
    <property type="entry name" value="UDP-Glycosyltransferase/glycogen phosphorylase"/>
    <property type="match status" value="1"/>
</dbReference>
<keyword id="KW-0131">Cell cycle</keyword>
<keyword id="KW-0132">Cell division</keyword>
<keyword id="KW-1003">Cell membrane</keyword>
<keyword id="KW-0133">Cell shape</keyword>
<keyword id="KW-0961">Cell wall biogenesis/degradation</keyword>
<keyword id="KW-0328">Glycosyltransferase</keyword>
<keyword id="KW-0472">Membrane</keyword>
<keyword id="KW-0573">Peptidoglycan synthesis</keyword>
<keyword id="KW-0808">Transferase</keyword>
<feature type="chain" id="PRO_0000315200" description="UDP-N-acetylglucosamine--N-acetylmuramyl-(pentapeptide) pyrophosphoryl-undecaprenol N-acetylglucosamine transferase">
    <location>
        <begin position="1"/>
        <end position="343"/>
    </location>
</feature>
<feature type="binding site" evidence="1">
    <location>
        <begin position="10"/>
        <end position="12"/>
    </location>
    <ligand>
        <name>UDP-N-acetyl-alpha-D-glucosamine</name>
        <dbReference type="ChEBI" id="CHEBI:57705"/>
    </ligand>
</feature>
<feature type="binding site" evidence="1">
    <location>
        <position position="113"/>
    </location>
    <ligand>
        <name>UDP-N-acetyl-alpha-D-glucosamine</name>
        <dbReference type="ChEBI" id="CHEBI:57705"/>
    </ligand>
</feature>
<feature type="binding site" evidence="1">
    <location>
        <position position="174"/>
    </location>
    <ligand>
        <name>UDP-N-acetyl-alpha-D-glucosamine</name>
        <dbReference type="ChEBI" id="CHEBI:57705"/>
    </ligand>
</feature>
<feature type="binding site" evidence="1">
    <location>
        <position position="275"/>
    </location>
    <ligand>
        <name>UDP-N-acetyl-alpha-D-glucosamine</name>
        <dbReference type="ChEBI" id="CHEBI:57705"/>
    </ligand>
</feature>
<organism>
    <name type="scientific">Wolbachia pipientis wMel</name>
    <dbReference type="NCBI Taxonomy" id="163164"/>
    <lineage>
        <taxon>Bacteria</taxon>
        <taxon>Pseudomonadati</taxon>
        <taxon>Pseudomonadota</taxon>
        <taxon>Alphaproteobacteria</taxon>
        <taxon>Rickettsiales</taxon>
        <taxon>Anaplasmataceae</taxon>
        <taxon>Wolbachieae</taxon>
        <taxon>Wolbachia</taxon>
    </lineage>
</organism>
<sequence>MDIILATGGTGGHIFPAIALAKALKTQGYNCILFTDKKTNKNTDIESYTLPLRRPSSNKFKFFLFLIYSSMLALYQVRKLKPKSVIGFGSYASFPTLLAARVLSIPIILHEQNTVLGRVNRFFFKSAKLIATSFPETKYAEGNKCIFTGNFVDIKAQSHSSTEKILNILVIAGSQGANFFDDVVSSVICDLPIKMKKKIRVTQQCTKKNVNKVKSLYKSEKIDCELSEFFDDMENRLANAHLVISRAGATSIAEITLARRSAIYIPYPYSKDNHQFYNAKYIEDSRAAIIVKQNSEAKKNLTEVLFDLLNNSQKLRDMTNSTEKTGIKNGTTEFVKVIVHRFS</sequence>
<proteinExistence type="inferred from homology"/>
<accession>Q73I55</accession>
<protein>
    <recommendedName>
        <fullName evidence="1">UDP-N-acetylglucosamine--N-acetylmuramyl-(pentapeptide) pyrophosphoryl-undecaprenol N-acetylglucosamine transferase</fullName>
        <ecNumber evidence="1">2.4.1.227</ecNumber>
    </recommendedName>
    <alternativeName>
        <fullName evidence="1">Undecaprenyl-PP-MurNAc-pentapeptide-UDPGlcNAc GlcNAc transferase</fullName>
    </alternativeName>
</protein>
<comment type="function">
    <text evidence="1">Cell wall formation. Catalyzes the transfer of a GlcNAc subunit on undecaprenyl-pyrophosphoryl-MurNAc-pentapeptide (lipid intermediate I) to form undecaprenyl-pyrophosphoryl-MurNAc-(pentapeptide)GlcNAc (lipid intermediate II).</text>
</comment>
<comment type="catalytic activity">
    <reaction evidence="1">
        <text>di-trans,octa-cis-undecaprenyl diphospho-N-acetyl-alpha-D-muramoyl-L-alanyl-D-glutamyl-meso-2,6-diaminopimeloyl-D-alanyl-D-alanine + UDP-N-acetyl-alpha-D-glucosamine = di-trans,octa-cis-undecaprenyl diphospho-[N-acetyl-alpha-D-glucosaminyl-(1-&gt;4)]-N-acetyl-alpha-D-muramoyl-L-alanyl-D-glutamyl-meso-2,6-diaminopimeloyl-D-alanyl-D-alanine + UDP + H(+)</text>
        <dbReference type="Rhea" id="RHEA:31227"/>
        <dbReference type="ChEBI" id="CHEBI:15378"/>
        <dbReference type="ChEBI" id="CHEBI:57705"/>
        <dbReference type="ChEBI" id="CHEBI:58223"/>
        <dbReference type="ChEBI" id="CHEBI:61387"/>
        <dbReference type="ChEBI" id="CHEBI:61388"/>
        <dbReference type="EC" id="2.4.1.227"/>
    </reaction>
</comment>
<comment type="pathway">
    <text evidence="1">Cell wall biogenesis; peptidoglycan biosynthesis.</text>
</comment>
<comment type="subcellular location">
    <subcellularLocation>
        <location evidence="1">Cell membrane</location>
        <topology evidence="1">Peripheral membrane protein</topology>
        <orientation evidence="1">Cytoplasmic side</orientation>
    </subcellularLocation>
</comment>
<comment type="similarity">
    <text evidence="1">Belongs to the glycosyltransferase 28 family. MurG subfamily.</text>
</comment>
<name>MURG_WOLPM</name>
<gene>
    <name evidence="1" type="primary">murG</name>
    <name type="ordered locus">WD_0323</name>
</gene>
<reference key="1">
    <citation type="journal article" date="2004" name="PLoS Biol.">
        <title>Phylogenomics of the reproductive parasite Wolbachia pipientis wMel: a streamlined genome overrun by mobile genetic elements.</title>
        <authorList>
            <person name="Wu M."/>
            <person name="Sun L.V."/>
            <person name="Vamathevan J.J."/>
            <person name="Riegler M."/>
            <person name="DeBoy R.T."/>
            <person name="Brownlie J.C."/>
            <person name="McGraw E.A."/>
            <person name="Martin W."/>
            <person name="Esser C."/>
            <person name="Ahmadinejad N."/>
            <person name="Wiegand C."/>
            <person name="Madupu R."/>
            <person name="Beanan M.J."/>
            <person name="Brinkac L.M."/>
            <person name="Daugherty S.C."/>
            <person name="Durkin A.S."/>
            <person name="Kolonay J.F."/>
            <person name="Nelson W.C."/>
            <person name="Mohamoud Y."/>
            <person name="Lee P."/>
            <person name="Berry K.J."/>
            <person name="Young M.B."/>
            <person name="Utterback T.R."/>
            <person name="Weidman J.F."/>
            <person name="Nierman W.C."/>
            <person name="Paulsen I.T."/>
            <person name="Nelson K.E."/>
            <person name="Tettelin H."/>
            <person name="O'Neill S.L."/>
            <person name="Eisen J.A."/>
        </authorList>
    </citation>
    <scope>NUCLEOTIDE SEQUENCE [LARGE SCALE GENOMIC DNA]</scope>
</reference>
<evidence type="ECO:0000255" key="1">
    <source>
        <dbReference type="HAMAP-Rule" id="MF_00033"/>
    </source>
</evidence>